<comment type="function">
    <text evidence="1 5">Key enzyme for ketone body catabolism (PubMed:24100554). Transfers the CoA moiety from succinate to acetoacetate (PubMed:24100554). Formation of the enzyme-CoA intermediate proceeds via an unstable anhydride species formed between the carboxylate groups of the enzyme and substrate (By similarity).</text>
</comment>
<comment type="catalytic activity">
    <reaction evidence="4 5">
        <text>a 3-oxo acid + succinyl-CoA = a 3-oxoacyl-CoA + succinate</text>
        <dbReference type="Rhea" id="RHEA:24564"/>
        <dbReference type="ChEBI" id="CHEBI:30031"/>
        <dbReference type="ChEBI" id="CHEBI:35973"/>
        <dbReference type="ChEBI" id="CHEBI:57292"/>
        <dbReference type="ChEBI" id="CHEBI:90726"/>
        <dbReference type="EC" id="2.8.3.5"/>
    </reaction>
</comment>
<comment type="pathway">
    <text evidence="4 5">Ketone metabolism; succinyl-CoA degradation; acetoacetyl-CoA from succinyl-CoA: step 1/1.</text>
</comment>
<comment type="subunit">
    <text evidence="5">Homodimer.</text>
</comment>
<comment type="subcellular location">
    <subcellularLocation>
        <location evidence="2">Mitochondrion</location>
    </subcellularLocation>
</comment>
<comment type="alternative products">
    <event type="alternative splicing"/>
    <isoform>
        <id>Q9W058-1</id>
        <name evidence="9">A</name>
        <sequence type="displayed"/>
    </isoform>
    <isoform>
        <id>Q9W058-2</id>
        <name evidence="9">B</name>
        <sequence type="described" ref="VSP_058745"/>
    </isoform>
</comment>
<comment type="similarity">
    <text evidence="7">Belongs to the 3-oxoacid CoA-transferase family.</text>
</comment>
<accession>Q9W058</accession>
<accession>Q8IRG3</accession>
<reference evidence="10" key="1">
    <citation type="journal article" date="2000" name="Science">
        <title>The genome sequence of Drosophila melanogaster.</title>
        <authorList>
            <person name="Adams M.D."/>
            <person name="Celniker S.E."/>
            <person name="Holt R.A."/>
            <person name="Evans C.A."/>
            <person name="Gocayne J.D."/>
            <person name="Amanatides P.G."/>
            <person name="Scherer S.E."/>
            <person name="Li P.W."/>
            <person name="Hoskins R.A."/>
            <person name="Galle R.F."/>
            <person name="George R.A."/>
            <person name="Lewis S.E."/>
            <person name="Richards S."/>
            <person name="Ashburner M."/>
            <person name="Henderson S.N."/>
            <person name="Sutton G.G."/>
            <person name="Wortman J.R."/>
            <person name="Yandell M.D."/>
            <person name="Zhang Q."/>
            <person name="Chen L.X."/>
            <person name="Brandon R.C."/>
            <person name="Rogers Y.-H.C."/>
            <person name="Blazej R.G."/>
            <person name="Champe M."/>
            <person name="Pfeiffer B.D."/>
            <person name="Wan K.H."/>
            <person name="Doyle C."/>
            <person name="Baxter E.G."/>
            <person name="Helt G."/>
            <person name="Nelson C.R."/>
            <person name="Miklos G.L.G."/>
            <person name="Abril J.F."/>
            <person name="Agbayani A."/>
            <person name="An H.-J."/>
            <person name="Andrews-Pfannkoch C."/>
            <person name="Baldwin D."/>
            <person name="Ballew R.M."/>
            <person name="Basu A."/>
            <person name="Baxendale J."/>
            <person name="Bayraktaroglu L."/>
            <person name="Beasley E.M."/>
            <person name="Beeson K.Y."/>
            <person name="Benos P.V."/>
            <person name="Berman B.P."/>
            <person name="Bhandari D."/>
            <person name="Bolshakov S."/>
            <person name="Borkova D."/>
            <person name="Botchan M.R."/>
            <person name="Bouck J."/>
            <person name="Brokstein P."/>
            <person name="Brottier P."/>
            <person name="Burtis K.C."/>
            <person name="Busam D.A."/>
            <person name="Butler H."/>
            <person name="Cadieu E."/>
            <person name="Center A."/>
            <person name="Chandra I."/>
            <person name="Cherry J.M."/>
            <person name="Cawley S."/>
            <person name="Dahlke C."/>
            <person name="Davenport L.B."/>
            <person name="Davies P."/>
            <person name="de Pablos B."/>
            <person name="Delcher A."/>
            <person name="Deng Z."/>
            <person name="Mays A.D."/>
            <person name="Dew I."/>
            <person name="Dietz S.M."/>
            <person name="Dodson K."/>
            <person name="Doup L.E."/>
            <person name="Downes M."/>
            <person name="Dugan-Rocha S."/>
            <person name="Dunkov B.C."/>
            <person name="Dunn P."/>
            <person name="Durbin K.J."/>
            <person name="Evangelista C.C."/>
            <person name="Ferraz C."/>
            <person name="Ferriera S."/>
            <person name="Fleischmann W."/>
            <person name="Fosler C."/>
            <person name="Gabrielian A.E."/>
            <person name="Garg N.S."/>
            <person name="Gelbart W.M."/>
            <person name="Glasser K."/>
            <person name="Glodek A."/>
            <person name="Gong F."/>
            <person name="Gorrell J.H."/>
            <person name="Gu Z."/>
            <person name="Guan P."/>
            <person name="Harris M."/>
            <person name="Harris N.L."/>
            <person name="Harvey D.A."/>
            <person name="Heiman T.J."/>
            <person name="Hernandez J.R."/>
            <person name="Houck J."/>
            <person name="Hostin D."/>
            <person name="Houston K.A."/>
            <person name="Howland T.J."/>
            <person name="Wei M.-H."/>
            <person name="Ibegwam C."/>
            <person name="Jalali M."/>
            <person name="Kalush F."/>
            <person name="Karpen G.H."/>
            <person name="Ke Z."/>
            <person name="Kennison J.A."/>
            <person name="Ketchum K.A."/>
            <person name="Kimmel B.E."/>
            <person name="Kodira C.D."/>
            <person name="Kraft C.L."/>
            <person name="Kravitz S."/>
            <person name="Kulp D."/>
            <person name="Lai Z."/>
            <person name="Lasko P."/>
            <person name="Lei Y."/>
            <person name="Levitsky A.A."/>
            <person name="Li J.H."/>
            <person name="Li Z."/>
            <person name="Liang Y."/>
            <person name="Lin X."/>
            <person name="Liu X."/>
            <person name="Mattei B."/>
            <person name="McIntosh T.C."/>
            <person name="McLeod M.P."/>
            <person name="McPherson D."/>
            <person name="Merkulov G."/>
            <person name="Milshina N.V."/>
            <person name="Mobarry C."/>
            <person name="Morris J."/>
            <person name="Moshrefi A."/>
            <person name="Mount S.M."/>
            <person name="Moy M."/>
            <person name="Murphy B."/>
            <person name="Murphy L."/>
            <person name="Muzny D.M."/>
            <person name="Nelson D.L."/>
            <person name="Nelson D.R."/>
            <person name="Nelson K.A."/>
            <person name="Nixon K."/>
            <person name="Nusskern D.R."/>
            <person name="Pacleb J.M."/>
            <person name="Palazzolo M."/>
            <person name="Pittman G.S."/>
            <person name="Pan S."/>
            <person name="Pollard J."/>
            <person name="Puri V."/>
            <person name="Reese M.G."/>
            <person name="Reinert K."/>
            <person name="Remington K."/>
            <person name="Saunders R.D.C."/>
            <person name="Scheeler F."/>
            <person name="Shen H."/>
            <person name="Shue B.C."/>
            <person name="Siden-Kiamos I."/>
            <person name="Simpson M."/>
            <person name="Skupski M.P."/>
            <person name="Smith T.J."/>
            <person name="Spier E."/>
            <person name="Spradling A.C."/>
            <person name="Stapleton M."/>
            <person name="Strong R."/>
            <person name="Sun E."/>
            <person name="Svirskas R."/>
            <person name="Tector C."/>
            <person name="Turner R."/>
            <person name="Venter E."/>
            <person name="Wang A.H."/>
            <person name="Wang X."/>
            <person name="Wang Z.-Y."/>
            <person name="Wassarman D.A."/>
            <person name="Weinstock G.M."/>
            <person name="Weissenbach J."/>
            <person name="Williams S.M."/>
            <person name="Woodage T."/>
            <person name="Worley K.C."/>
            <person name="Wu D."/>
            <person name="Yang S."/>
            <person name="Yao Q.A."/>
            <person name="Ye J."/>
            <person name="Yeh R.-F."/>
            <person name="Zaveri J.S."/>
            <person name="Zhan M."/>
            <person name="Zhang G."/>
            <person name="Zhao Q."/>
            <person name="Zheng L."/>
            <person name="Zheng X.H."/>
            <person name="Zhong F.N."/>
            <person name="Zhong W."/>
            <person name="Zhou X."/>
            <person name="Zhu S.C."/>
            <person name="Zhu X."/>
            <person name="Smith H.O."/>
            <person name="Gibbs R.A."/>
            <person name="Myers E.W."/>
            <person name="Rubin G.M."/>
            <person name="Venter J.C."/>
        </authorList>
    </citation>
    <scope>NUCLEOTIDE SEQUENCE [LARGE SCALE GENOMIC DNA]</scope>
    <source>
        <strain evidence="10">Berkeley</strain>
    </source>
</reference>
<reference evidence="10" key="2">
    <citation type="journal article" date="2002" name="Genome Biol.">
        <title>Annotation of the Drosophila melanogaster euchromatic genome: a systematic review.</title>
        <authorList>
            <person name="Misra S."/>
            <person name="Crosby M.A."/>
            <person name="Mungall C.J."/>
            <person name="Matthews B.B."/>
            <person name="Campbell K.S."/>
            <person name="Hradecky P."/>
            <person name="Huang Y."/>
            <person name="Kaminker J.S."/>
            <person name="Millburn G.H."/>
            <person name="Prochnik S.E."/>
            <person name="Smith C.D."/>
            <person name="Tupy J.L."/>
            <person name="Whitfield E.J."/>
            <person name="Bayraktaroglu L."/>
            <person name="Berman B.P."/>
            <person name="Bettencourt B.R."/>
            <person name="Celniker S.E."/>
            <person name="de Grey A.D.N.J."/>
            <person name="Drysdale R.A."/>
            <person name="Harris N.L."/>
            <person name="Richter J."/>
            <person name="Russo S."/>
            <person name="Schroeder A.J."/>
            <person name="Shu S.Q."/>
            <person name="Stapleton M."/>
            <person name="Yamada C."/>
            <person name="Ashburner M."/>
            <person name="Gelbart W.M."/>
            <person name="Rubin G.M."/>
            <person name="Lewis S.E."/>
        </authorList>
    </citation>
    <scope>GENOME REANNOTATION</scope>
    <source>
        <strain evidence="10">Berkeley</strain>
    </source>
</reference>
<reference evidence="8" key="3">
    <citation type="journal article" date="2002" name="Genome Biol.">
        <title>A Drosophila full-length cDNA resource.</title>
        <authorList>
            <person name="Stapleton M."/>
            <person name="Carlson J.W."/>
            <person name="Brokstein P."/>
            <person name="Yu C."/>
            <person name="Champe M."/>
            <person name="George R.A."/>
            <person name="Guarin H."/>
            <person name="Kronmiller B."/>
            <person name="Pacleb J.M."/>
            <person name="Park S."/>
            <person name="Wan K.H."/>
            <person name="Rubin G.M."/>
            <person name="Celniker S.E."/>
        </authorList>
    </citation>
    <scope>NUCLEOTIDE SEQUENCE [LARGE SCALE MRNA]</scope>
    <source>
        <strain evidence="8">Berkeley</strain>
        <tissue evidence="8">Head</tissue>
    </source>
</reference>
<reference evidence="11" key="4">
    <citation type="journal article" date="2013" name="Acta Crystallogr. F Struct. Biol. Commun.">
        <title>Structure of succinyl-CoA:3-ketoacid CoA transferase from Drosophila melanogaster.</title>
        <authorList>
            <person name="Zhang M."/>
            <person name="Xu H.Y."/>
            <person name="Wang Y.C."/>
            <person name="Shi Z.B."/>
            <person name="Zhang N.N."/>
        </authorList>
    </citation>
    <scope>X-RAY CRYSTALLOGRAPHY (2.64 ANGSTROMS) OF 34-516</scope>
    <scope>FUNCTION</scope>
    <scope>CATALYTIC ACTIVITY</scope>
    <scope>PATHWAY</scope>
    <scope>SUBUNIT</scope>
</reference>
<feature type="transit peptide" description="Mitochondrion" evidence="3">
    <location>
        <begin position="1"/>
        <end position="25"/>
    </location>
</feature>
<feature type="chain" id="PRO_0000438776" description="Succinyl-CoA:3-ketoacid-coenzyme A transferase, mitochondrial" evidence="3">
    <location>
        <begin position="26"/>
        <end position="516"/>
    </location>
</feature>
<feature type="active site" description="5-glutamyl coenzyme A thioester intermediate" evidence="4">
    <location>
        <position position="340"/>
    </location>
</feature>
<feature type="splice variant" id="VSP_058745" description="In isoform B.">
    <original>MLCRLVGNRSLGARYTASIK</original>
    <variation>MDGWLA</variation>
    <location>
        <begin position="1"/>
        <end position="20"/>
    </location>
</feature>
<feature type="helix" evidence="12">
    <location>
        <begin position="40"/>
        <end position="43"/>
    </location>
</feature>
<feature type="turn" evidence="12">
    <location>
        <begin position="44"/>
        <end position="46"/>
    </location>
</feature>
<feature type="strand" evidence="12">
    <location>
        <begin position="52"/>
        <end position="55"/>
    </location>
</feature>
<feature type="helix" evidence="12">
    <location>
        <begin position="65"/>
        <end position="74"/>
    </location>
</feature>
<feature type="strand" evidence="12">
    <location>
        <begin position="78"/>
        <end position="82"/>
    </location>
</feature>
<feature type="helix" evidence="12">
    <location>
        <begin position="94"/>
        <end position="98"/>
    </location>
</feature>
<feature type="strand" evidence="12">
    <location>
        <begin position="102"/>
        <end position="108"/>
    </location>
</feature>
<feature type="helix" evidence="12">
    <location>
        <begin position="114"/>
        <end position="121"/>
    </location>
</feature>
<feature type="strand" evidence="12">
    <location>
        <begin position="126"/>
        <end position="129"/>
    </location>
</feature>
<feature type="helix" evidence="12">
    <location>
        <begin position="132"/>
        <end position="143"/>
    </location>
</feature>
<feature type="strand" evidence="12">
    <location>
        <begin position="148"/>
        <end position="152"/>
    </location>
</feature>
<feature type="turn" evidence="12">
    <location>
        <begin position="153"/>
        <end position="156"/>
    </location>
</feature>
<feature type="helix" evidence="12">
    <location>
        <begin position="158"/>
        <end position="161"/>
    </location>
</feature>
<feature type="strand" evidence="12">
    <location>
        <begin position="165"/>
        <end position="168"/>
    </location>
</feature>
<feature type="strand" evidence="12">
    <location>
        <begin position="173"/>
        <end position="177"/>
    </location>
</feature>
<feature type="strand" evidence="12">
    <location>
        <begin position="183"/>
        <end position="186"/>
    </location>
</feature>
<feature type="strand" evidence="12">
    <location>
        <begin position="189"/>
        <end position="195"/>
    </location>
</feature>
<feature type="strand" evidence="12">
    <location>
        <begin position="199"/>
        <end position="205"/>
    </location>
</feature>
<feature type="strand" evidence="12">
    <location>
        <begin position="207"/>
        <end position="209"/>
    </location>
</feature>
<feature type="helix" evidence="12">
    <location>
        <begin position="219"/>
        <end position="221"/>
    </location>
</feature>
<feature type="helix" evidence="12">
    <location>
        <begin position="225"/>
        <end position="228"/>
    </location>
</feature>
<feature type="strand" evidence="12">
    <location>
        <begin position="231"/>
        <end position="242"/>
    </location>
</feature>
<feature type="turn" evidence="12">
    <location>
        <begin position="250"/>
        <end position="252"/>
    </location>
</feature>
<feature type="helix" evidence="12">
    <location>
        <begin position="257"/>
        <end position="259"/>
    </location>
</feature>
<feature type="strand" evidence="12">
    <location>
        <begin position="261"/>
        <end position="265"/>
    </location>
</feature>
<feature type="helix" evidence="12">
    <location>
        <begin position="293"/>
        <end position="305"/>
    </location>
</feature>
<feature type="helix" evidence="12">
    <location>
        <begin position="306"/>
        <end position="308"/>
    </location>
</feature>
<feature type="strand" evidence="12">
    <location>
        <begin position="313"/>
        <end position="317"/>
    </location>
</feature>
<feature type="helix" evidence="12">
    <location>
        <begin position="321"/>
        <end position="324"/>
    </location>
</feature>
<feature type="helix" evidence="12">
    <location>
        <begin position="325"/>
        <end position="328"/>
    </location>
</feature>
<feature type="strand" evidence="12">
    <location>
        <begin position="335"/>
        <end position="339"/>
    </location>
</feature>
<feature type="turn" evidence="12">
    <location>
        <begin position="340"/>
        <end position="342"/>
    </location>
</feature>
<feature type="strand" evidence="12">
    <location>
        <begin position="343"/>
        <end position="346"/>
    </location>
</feature>
<feature type="helix" evidence="12">
    <location>
        <begin position="352"/>
        <end position="354"/>
    </location>
</feature>
<feature type="strand" evidence="12">
    <location>
        <begin position="364"/>
        <end position="366"/>
    </location>
</feature>
<feature type="strand" evidence="12">
    <location>
        <begin position="369"/>
        <end position="375"/>
    </location>
</feature>
<feature type="helix" evidence="12">
    <location>
        <begin position="378"/>
        <end position="386"/>
    </location>
</feature>
<feature type="strand" evidence="12">
    <location>
        <begin position="392"/>
        <end position="395"/>
    </location>
</feature>
<feature type="strand" evidence="12">
    <location>
        <begin position="398"/>
        <end position="401"/>
    </location>
</feature>
<feature type="helix" evidence="12">
    <location>
        <begin position="422"/>
        <end position="427"/>
    </location>
</feature>
<feature type="strand" evidence="12">
    <location>
        <begin position="432"/>
        <end position="436"/>
    </location>
</feature>
<feature type="strand" evidence="12">
    <location>
        <begin position="439"/>
        <end position="441"/>
    </location>
</feature>
<feature type="turn" evidence="12">
    <location>
        <begin position="442"/>
        <end position="444"/>
    </location>
</feature>
<feature type="strand" evidence="12">
    <location>
        <begin position="445"/>
        <end position="451"/>
    </location>
</feature>
<feature type="strand" evidence="12">
    <location>
        <begin position="456"/>
        <end position="460"/>
    </location>
</feature>
<feature type="strand" evidence="12">
    <location>
        <begin position="463"/>
        <end position="466"/>
    </location>
</feature>
<feature type="strand" evidence="12">
    <location>
        <begin position="468"/>
        <end position="475"/>
    </location>
</feature>
<feature type="turn" evidence="12">
    <location>
        <begin position="476"/>
        <end position="478"/>
    </location>
</feature>
<feature type="strand" evidence="12">
    <location>
        <begin position="479"/>
        <end position="485"/>
    </location>
</feature>
<feature type="helix" evidence="12">
    <location>
        <begin position="491"/>
        <end position="496"/>
    </location>
</feature>
<feature type="strand" evidence="12">
    <location>
        <begin position="503"/>
        <end position="510"/>
    </location>
</feature>
<name>SCOT_DROME</name>
<proteinExistence type="evidence at protein level"/>
<protein>
    <recommendedName>
        <fullName evidence="9">Succinyl-CoA:3-ketoacid-coenzyme A transferase, mitochondrial</fullName>
        <ecNumber evidence="4 5">2.8.3.5</ecNumber>
    </recommendedName>
    <alternativeName>
        <fullName evidence="7">3-oxoacid CoA-transferase</fullName>
    </alternativeName>
</protein>
<dbReference type="EC" id="2.8.3.5" evidence="4 5"/>
<dbReference type="EMBL" id="AE014296">
    <property type="protein sequence ID" value="AAF47600.1"/>
    <property type="molecule type" value="Genomic_DNA"/>
</dbReference>
<dbReference type="EMBL" id="AE014296">
    <property type="protein sequence ID" value="AAN11508.1"/>
    <property type="molecule type" value="Genomic_DNA"/>
</dbReference>
<dbReference type="EMBL" id="AY058254">
    <property type="protein sequence ID" value="AAL13483.1"/>
    <property type="molecule type" value="mRNA"/>
</dbReference>
<dbReference type="RefSeq" id="NP_647683.1">
    <molecule id="Q9W058-1"/>
    <property type="nucleotide sequence ID" value="NM_139426.3"/>
</dbReference>
<dbReference type="RefSeq" id="NP_728699.1">
    <molecule id="Q9W058-2"/>
    <property type="nucleotide sequence ID" value="NM_167928.2"/>
</dbReference>
<dbReference type="PDB" id="4KGB">
    <property type="method" value="X-ray"/>
    <property type="resolution" value="2.64 A"/>
    <property type="chains" value="A/B=34-516"/>
</dbReference>
<dbReference type="PDBsum" id="4KGB"/>
<dbReference type="SMR" id="Q9W058"/>
<dbReference type="FunCoup" id="Q9W058">
    <property type="interactions" value="664"/>
</dbReference>
<dbReference type="IntAct" id="Q9W058">
    <property type="interactions" value="5"/>
</dbReference>
<dbReference type="STRING" id="7227.FBpp0072723"/>
<dbReference type="PaxDb" id="7227-FBpp0072723"/>
<dbReference type="DNASU" id="38261"/>
<dbReference type="EnsemblMetazoa" id="FBtr0072843">
    <molecule id="Q9W058-2"/>
    <property type="protein sequence ID" value="FBpp0072722"/>
    <property type="gene ID" value="FBgn0035298"/>
</dbReference>
<dbReference type="EnsemblMetazoa" id="FBtr0072844">
    <molecule id="Q9W058-1"/>
    <property type="protein sequence ID" value="FBpp0072723"/>
    <property type="gene ID" value="FBgn0035298"/>
</dbReference>
<dbReference type="GeneID" id="38261"/>
<dbReference type="KEGG" id="dme:Dmel_CG1140"/>
<dbReference type="UCSC" id="CG1140-RA">
    <molecule id="Q9W058-1"/>
    <property type="organism name" value="d. melanogaster"/>
</dbReference>
<dbReference type="UCSC" id="CG1140-RB">
    <property type="organism name" value="d. melanogaster"/>
</dbReference>
<dbReference type="AGR" id="FB:FBgn0035298"/>
<dbReference type="CTD" id="38261"/>
<dbReference type="FlyBase" id="FBgn0035298">
    <property type="gene designation" value="Scot"/>
</dbReference>
<dbReference type="VEuPathDB" id="VectorBase:FBgn0035298"/>
<dbReference type="eggNOG" id="KOG3822">
    <property type="taxonomic scope" value="Eukaryota"/>
</dbReference>
<dbReference type="GeneTree" id="ENSGT00390000009130"/>
<dbReference type="InParanoid" id="Q9W058"/>
<dbReference type="OMA" id="VKTMGQI"/>
<dbReference type="OrthoDB" id="1933379at2759"/>
<dbReference type="PhylomeDB" id="Q9W058"/>
<dbReference type="BRENDA" id="2.8.3.5">
    <property type="organism ID" value="1994"/>
</dbReference>
<dbReference type="Reactome" id="R-DME-77108">
    <property type="pathway name" value="Utilization of Ketone Bodies"/>
</dbReference>
<dbReference type="Reactome" id="R-DME-9837999">
    <property type="pathway name" value="Mitochondrial protein degradation"/>
</dbReference>
<dbReference type="UniPathway" id="UPA00929">
    <property type="reaction ID" value="UER00894"/>
</dbReference>
<dbReference type="BioGRID-ORCS" id="38261">
    <property type="hits" value="0 hits in 3 CRISPR screens"/>
</dbReference>
<dbReference type="EvolutionaryTrace" id="Q9W058"/>
<dbReference type="GenomeRNAi" id="38261"/>
<dbReference type="PRO" id="PR:Q9W058"/>
<dbReference type="Proteomes" id="UP000000803">
    <property type="component" value="Chromosome 3L"/>
</dbReference>
<dbReference type="Bgee" id="FBgn0035298">
    <property type="expression patterns" value="Expressed in adult Malpighian tubule (Drosophila) and 94 other cell types or tissues"/>
</dbReference>
<dbReference type="ExpressionAtlas" id="Q9W058">
    <property type="expression patterns" value="baseline and differential"/>
</dbReference>
<dbReference type="GO" id="GO:0005739">
    <property type="term" value="C:mitochondrion"/>
    <property type="evidence" value="ECO:0000250"/>
    <property type="project" value="FlyBase"/>
</dbReference>
<dbReference type="GO" id="GO:0008260">
    <property type="term" value="F:succinyl-CoA:3-oxo-acid CoA-transferase activity"/>
    <property type="evidence" value="ECO:0000314"/>
    <property type="project" value="FlyBase"/>
</dbReference>
<dbReference type="GO" id="GO:0046952">
    <property type="term" value="P:ketone body catabolic process"/>
    <property type="evidence" value="ECO:0007669"/>
    <property type="project" value="InterPro"/>
</dbReference>
<dbReference type="GO" id="GO:1902224">
    <property type="term" value="P:ketone body metabolic process"/>
    <property type="evidence" value="ECO:0000250"/>
    <property type="project" value="FlyBase"/>
</dbReference>
<dbReference type="DisProt" id="DP02828"/>
<dbReference type="FunFam" id="3.40.1080.10:FF:000001">
    <property type="entry name" value="Succinyl-coa:3-ketoacid-coenzyme a transferase subunit b"/>
    <property type="match status" value="1"/>
</dbReference>
<dbReference type="FunFam" id="3.40.1080.10:FF:000002">
    <property type="entry name" value="Succinyl-CoA:3-ketoacid-coenzyme A transferase, mitochondrial"/>
    <property type="match status" value="1"/>
</dbReference>
<dbReference type="Gene3D" id="3.40.1080.10">
    <property type="entry name" value="Glutaconate Coenzyme A-transferase"/>
    <property type="match status" value="2"/>
</dbReference>
<dbReference type="InterPro" id="IPR012792">
    <property type="entry name" value="3-oxoacid_CoA-transf_A"/>
</dbReference>
<dbReference type="InterPro" id="IPR012791">
    <property type="entry name" value="3-oxoacid_CoA-transf_B"/>
</dbReference>
<dbReference type="InterPro" id="IPR014388">
    <property type="entry name" value="3-oxoacid_CoA-transferase"/>
</dbReference>
<dbReference type="InterPro" id="IPR004165">
    <property type="entry name" value="CoA_trans_fam_I"/>
</dbReference>
<dbReference type="InterPro" id="IPR004164">
    <property type="entry name" value="CoA_transf_AS"/>
</dbReference>
<dbReference type="InterPro" id="IPR004163">
    <property type="entry name" value="CoA_transf_BS"/>
</dbReference>
<dbReference type="InterPro" id="IPR037171">
    <property type="entry name" value="NagB/RpiA_transferase-like"/>
</dbReference>
<dbReference type="NCBIfam" id="TIGR02429">
    <property type="entry name" value="pcaI_scoA_fam"/>
    <property type="match status" value="1"/>
</dbReference>
<dbReference type="NCBIfam" id="TIGR02428">
    <property type="entry name" value="pcaJ_scoB_fam"/>
    <property type="match status" value="1"/>
</dbReference>
<dbReference type="PANTHER" id="PTHR13707">
    <property type="entry name" value="KETOACID-COENZYME A TRANSFERASE"/>
    <property type="match status" value="1"/>
</dbReference>
<dbReference type="PANTHER" id="PTHR13707:SF23">
    <property type="entry name" value="SUCCINYL-COA:3-KETOACID-COENZYME A TRANSFERASE"/>
    <property type="match status" value="1"/>
</dbReference>
<dbReference type="Pfam" id="PF01144">
    <property type="entry name" value="CoA_trans"/>
    <property type="match status" value="2"/>
</dbReference>
<dbReference type="PIRSF" id="PIRSF000858">
    <property type="entry name" value="SCOT-t"/>
    <property type="match status" value="1"/>
</dbReference>
<dbReference type="SMART" id="SM00882">
    <property type="entry name" value="CoA_trans"/>
    <property type="match status" value="2"/>
</dbReference>
<dbReference type="SUPFAM" id="SSF100950">
    <property type="entry name" value="NagB/RpiA/CoA transferase-like"/>
    <property type="match status" value="2"/>
</dbReference>
<dbReference type="PROSITE" id="PS01273">
    <property type="entry name" value="COA_TRANSF_1"/>
    <property type="match status" value="1"/>
</dbReference>
<dbReference type="PROSITE" id="PS01274">
    <property type="entry name" value="COA_TRANSF_2"/>
    <property type="match status" value="1"/>
</dbReference>
<organism evidence="10">
    <name type="scientific">Drosophila melanogaster</name>
    <name type="common">Fruit fly</name>
    <dbReference type="NCBI Taxonomy" id="7227"/>
    <lineage>
        <taxon>Eukaryota</taxon>
        <taxon>Metazoa</taxon>
        <taxon>Ecdysozoa</taxon>
        <taxon>Arthropoda</taxon>
        <taxon>Hexapoda</taxon>
        <taxon>Insecta</taxon>
        <taxon>Pterygota</taxon>
        <taxon>Neoptera</taxon>
        <taxon>Endopterygota</taxon>
        <taxon>Diptera</taxon>
        <taxon>Brachycera</taxon>
        <taxon>Muscomorpha</taxon>
        <taxon>Ephydroidea</taxon>
        <taxon>Drosophilidae</taxon>
        <taxon>Drosophila</taxon>
        <taxon>Sophophora</taxon>
    </lineage>
</organism>
<sequence>MLCRLVGNRSLGARYTASIKAIACYSTSGKQRNGKIYESAIDAVADVQDGAQILFGGFGICGIPEKMINALKQKGVKNITGVSNNGGVDDTGLGVLIKQKQVSKVIGSYVGENTELVRQYLEGELAVELTPQGTLAEKIRAGGAGIPAFYTPTGYATLVQEGGAPIKYSKDGKVEISSEKKPVKEFNGKNYVMEESIFADFAFVKAQKADPLGNLVFNKAARNFNAPMCRAAKITVAEVEEIVPIGALSPDEIHVPGIYINRIFKGTNYNKRVERLRITEPKDPSKPAPPPNPAQVLRERIARRVALEFHDGMYANLGIGIPVLSSNYIPKGMNVMLQSENGILGLGPFPTKDKVDPDLINAGKESVTVVPGASYFGSDDSFAMIRGGHVDITILGAMEVSATGDLANWMIPGKLVKGMGGAMDLVAAPGTKVIITMEHNARDGSPKILDTCSLPLTGKGVIDMIISEKAVFTVEKGVGLTLIEVAEGYTVDDIIASTGAKFTVSPNLKKMGQIPV</sequence>
<gene>
    <name evidence="6 9" type="primary">Scot</name>
    <name evidence="9" type="ORF">CG1140</name>
</gene>
<keyword id="KW-0002">3D-structure</keyword>
<keyword id="KW-0025">Alternative splicing</keyword>
<keyword id="KW-0496">Mitochondrion</keyword>
<keyword id="KW-1185">Reference proteome</keyword>
<keyword id="KW-0808">Transferase</keyword>
<keyword id="KW-0809">Transit peptide</keyword>
<evidence type="ECO:0000250" key="1">
    <source>
        <dbReference type="UniProtKB" id="Q29551"/>
    </source>
</evidence>
<evidence type="ECO:0000250" key="2">
    <source>
        <dbReference type="UniProtKB" id="Q9BYC2"/>
    </source>
</evidence>
<evidence type="ECO:0000255" key="3"/>
<evidence type="ECO:0000255" key="4">
    <source>
        <dbReference type="PIRNR" id="PIRNR000858"/>
    </source>
</evidence>
<evidence type="ECO:0000269" key="5">
    <source>
    </source>
</evidence>
<evidence type="ECO:0000303" key="6">
    <source>
    </source>
</evidence>
<evidence type="ECO:0000305" key="7"/>
<evidence type="ECO:0000312" key="8">
    <source>
        <dbReference type="EMBL" id="AAL13483.1"/>
    </source>
</evidence>
<evidence type="ECO:0000312" key="9">
    <source>
        <dbReference type="FlyBase" id="FBgn0035298"/>
    </source>
</evidence>
<evidence type="ECO:0000312" key="10">
    <source>
        <dbReference type="Proteomes" id="UP000000803"/>
    </source>
</evidence>
<evidence type="ECO:0007744" key="11">
    <source>
        <dbReference type="PDB" id="4KGB"/>
    </source>
</evidence>
<evidence type="ECO:0007829" key="12">
    <source>
        <dbReference type="PDB" id="4KGB"/>
    </source>
</evidence>